<organism>
    <name type="scientific">Lymnaea stagnalis</name>
    <name type="common">Great pond snail</name>
    <name type="synonym">Helix stagnalis</name>
    <dbReference type="NCBI Taxonomy" id="6523"/>
    <lineage>
        <taxon>Eukaryota</taxon>
        <taxon>Metazoa</taxon>
        <taxon>Spiralia</taxon>
        <taxon>Lophotrochozoa</taxon>
        <taxon>Mollusca</taxon>
        <taxon>Gastropoda</taxon>
        <taxon>Heterobranchia</taxon>
        <taxon>Euthyneura</taxon>
        <taxon>Panpulmonata</taxon>
        <taxon>Hygrophila</taxon>
        <taxon>Lymnaeoidea</taxon>
        <taxon>Lymnaeidae</taxon>
        <taxon>Lymnaea</taxon>
    </lineage>
</organism>
<feature type="signal peptide" evidence="2">
    <location>
        <begin position="1"/>
        <end position="35"/>
    </location>
</feature>
<feature type="chain" id="PRO_0000016708" description="Putative molluscan insulin-related peptide(s) receptor alpha chain">
    <location>
        <begin position="36"/>
        <end position="694"/>
    </location>
</feature>
<feature type="chain" id="PRO_0000016710" description="Putative molluscan insulin-related peptide(s) receptor beta chain">
    <location>
        <begin position="698"/>
        <end position="1607"/>
    </location>
</feature>
<feature type="topological domain" description="Extracellular" evidence="2">
    <location>
        <begin position="698"/>
        <end position="975"/>
    </location>
</feature>
<feature type="transmembrane region" description="Helical" evidence="2">
    <location>
        <begin position="976"/>
        <end position="996"/>
    </location>
</feature>
<feature type="topological domain" description="Cytoplasmic" evidence="2">
    <location>
        <begin position="997"/>
        <end position="1607"/>
    </location>
</feature>
<feature type="domain" description="Fibronectin type-III 1" evidence="4">
    <location>
        <begin position="517"/>
        <end position="632"/>
    </location>
</feature>
<feature type="domain" description="Fibronectin type-III 2" evidence="4">
    <location>
        <begin position="636"/>
        <end position="726"/>
    </location>
</feature>
<feature type="domain" description="Fibronectin type-III 3" evidence="4">
    <location>
        <begin position="756"/>
        <end position="861"/>
    </location>
</feature>
<feature type="domain" description="Fibronectin type-III 4" evidence="4">
    <location>
        <begin position="870"/>
        <end position="967"/>
    </location>
</feature>
<feature type="domain" description="Protein kinase" evidence="3">
    <location>
        <begin position="1037"/>
        <end position="1308"/>
    </location>
</feature>
<feature type="region of interest" description="Disordered" evidence="6">
    <location>
        <begin position="1328"/>
        <end position="1352"/>
    </location>
</feature>
<feature type="region of interest" description="Disordered" evidence="6">
    <location>
        <begin position="1501"/>
        <end position="1539"/>
    </location>
</feature>
<feature type="compositionally biased region" description="Polar residues" evidence="6">
    <location>
        <begin position="1503"/>
        <end position="1515"/>
    </location>
</feature>
<feature type="compositionally biased region" description="Low complexity" evidence="6">
    <location>
        <begin position="1524"/>
        <end position="1538"/>
    </location>
</feature>
<feature type="active site" description="Proton acceptor" evidence="3 5">
    <location>
        <position position="1173"/>
    </location>
</feature>
<feature type="binding site" evidence="3">
    <location>
        <begin position="1043"/>
        <end position="1051"/>
    </location>
    <ligand>
        <name>ATP</name>
        <dbReference type="ChEBI" id="CHEBI:30616"/>
    </ligand>
</feature>
<feature type="binding site" evidence="3">
    <location>
        <position position="1072"/>
    </location>
    <ligand>
        <name>ATP</name>
        <dbReference type="ChEBI" id="CHEBI:30616"/>
    </ligand>
</feature>
<feature type="modified residue" description="Phosphotyrosine; by autocatalysis" evidence="1">
    <location>
        <position position="1199"/>
    </location>
</feature>
<feature type="glycosylation site" description="N-linked (GlcNAc...) asparagine" evidence="2">
    <location>
        <position position="82"/>
    </location>
</feature>
<feature type="glycosylation site" description="N-linked (GlcNAc...) asparagine" evidence="2">
    <location>
        <position position="188"/>
    </location>
</feature>
<feature type="glycosylation site" description="N-linked (GlcNAc...) asparagine" evidence="2">
    <location>
        <position position="245"/>
    </location>
</feature>
<feature type="glycosylation site" description="N-linked (GlcNAc...) asparagine" evidence="2">
    <location>
        <position position="275"/>
    </location>
</feature>
<feature type="glycosylation site" description="N-linked (GlcNAc...) asparagine" evidence="2">
    <location>
        <position position="332"/>
    </location>
</feature>
<feature type="glycosylation site" description="N-linked (GlcNAc...) asparagine" evidence="2">
    <location>
        <position position="343"/>
    </location>
</feature>
<feature type="glycosylation site" description="N-linked (GlcNAc...) asparagine" evidence="2">
    <location>
        <position position="495"/>
    </location>
</feature>
<feature type="glycosylation site" description="N-linked (GlcNAc...) asparagine" evidence="2">
    <location>
        <position position="520"/>
    </location>
</feature>
<feature type="glycosylation site" description="N-linked (GlcNAc...) asparagine" evidence="2">
    <location>
        <position position="663"/>
    </location>
</feature>
<feature type="glycosylation site" description="N-linked (GlcNAc...) asparagine" evidence="2">
    <location>
        <position position="710"/>
    </location>
</feature>
<feature type="glycosylation site" description="N-linked (GlcNAc...) asparagine" evidence="2">
    <location>
        <position position="778"/>
    </location>
</feature>
<feature type="glycosylation site" description="N-linked (GlcNAc...) asparagine" evidence="2">
    <location>
        <position position="796"/>
    </location>
</feature>
<feature type="glycosylation site" description="N-linked (GlcNAc...) asparagine" evidence="2">
    <location>
        <position position="802"/>
    </location>
</feature>
<feature type="glycosylation site" description="N-linked (GlcNAc...) asparagine" evidence="2">
    <location>
        <position position="868"/>
    </location>
</feature>
<feature type="glycosylation site" description="N-linked (GlcNAc...) asparagine" evidence="2">
    <location>
        <position position="879"/>
    </location>
</feature>
<feature type="glycosylation site" description="N-linked (GlcNAc...) asparagine" evidence="2">
    <location>
        <position position="940"/>
    </location>
</feature>
<feature type="glycosylation site" description="N-linked (GlcNAc...) asparagine" evidence="2">
    <location>
        <position position="953"/>
    </location>
</feature>
<proteinExistence type="evidence at transcript level"/>
<sequence>MHPGSISFNMIINKCIPICLFILFIMMMEFTVSKADSKNDIVSESHPSLQKLGCGGSQSPTNGVCGSVDIRSSMDNFKLLENCTVIEGSLRISLFELKALDFRHLSFPDLREITDYLLMYRVYGLETLSKLFPNLAIIRGRELFNSYAIVMYEMRDLQDLGLVNLRTISRGGVRLTKNFKLCYIETINWTQIGVSDPEARRFINNKEQCPNSCKDECQSKRCWTYSDCQKGLNCQCKENTYCMENGSCCHDYCLGGCKVPMNPDECFSCKEVQFNNTCRPQCPPGTYKFLNRRCLTDKECLALTNDPDGNTPKLLDGEKGEPSLCLYTCPQNYSVGDSKDNKNLSQCVKCRQLCPKECHGLEINNIQDAHKLKECSKISGPLKIQIMSGSNVAQELEKSLGNIREVTETIHIKRSYALVTLHFFKNLQIIGSKVPSSETQEGQSFSLFLMDNTNLQELFPEEQMKKMKILNGGIYVHDNGQLCPHTIKEFLSHLNLSEAQSSISSISNGHQRPCEKHDLNVTVEKIAHNAAILAWNKYKADERQLLTYILNYKEIKDESNDINIFQGRDLCSHDLWMTREYAPKEGPEADQIGMLYDLKPFTTYAVYIQAYTVSTATHAAMTNILTFTTYPFHPSEPTDLVAISEDPHELRVSWKPPKYPNGNITHYKIVYHKLELNEKSYEQRNYCRDPLVHQKKKEKVKIEEEGKKINNSANSNCCKCPKSKEEMDTESRKREIEMYFEDYLHKHIYCKRYDKLPDEVDLNFDGMNLPQLVEMNYNSSETSDRIEVFPNYVIENTSDLANLTEIVKEVVVYGTTEVTLPNLEHFSEYSIEVLACQDYNEKVLSKLCSIRAITFERTKDSYAADMINETTVDTEIETNFTGNVFIKWESPTSPNGLILKYLLWYKKANQENLVPQTICITRQEYLKNLGYKLTRLEPGNWTFKISAISLAENSSFTLERFFIVPRPPDPESSNTLLIVAIVLAFFGVLTVSLIVACVYYKQKIRSDDMTVISRNMNYVPSEILYISDEWEVDRDKIKLIKELGQGSFGMVYEGVAKGIRDDPNEEIPVAVKTVNDRASFSDRREFLKEATTMKEFHCHHVVKLLGVVSTGQPALVIMELMALGDLKNYLRGHRPDEDHPGVMPPHLLDILQMAGEIADGMAYLADKKFVHRDLAARNCMVSEERTVKIGDFGMTRDIYETDYYRKGGKGMLPVRWMAPESLKDGVFTSLSDVWSYGVVMWEMVTLAAQPYQGLSNEEVVKFISDGYIMELPENCPNEMAYLMQHCWAKKPNQRPTFKAIIEYLLPKLKPSFEKVSYFFTSGGGHTDGAGEGTLAEPEGSDDSSSINSLSCEGAAAPRQSLTPCGGGQFKSSTHFNGGSHTLYDEGVDRETILNGVDDGDEDEAAGRYSLSEFGEDLDDSSRPFMSDDFIPPVMTRQPLLSHQSNGNDSNVRNSGLIELKPLINKDKRPGLSSPRLNARSNPFSSEYIGHYPPTLTTELETLNGNQSSHNNNSFELMTPDPLKSGPASESSNGVSSSSWRPKPILKLPTLNQARVGDSVGCLCLTLGTRINIVKPIETVRPETNTIRYLKPPHPMLIWSTLKMVLVL</sequence>
<comment type="function">
    <text>This receptor probably binds to the four different molluscan insulin-related peptides and has a tyrosine-protein kinase activity.</text>
</comment>
<comment type="catalytic activity">
    <reaction evidence="5">
        <text>L-tyrosyl-[protein] + ATP = O-phospho-L-tyrosyl-[protein] + ADP + H(+)</text>
        <dbReference type="Rhea" id="RHEA:10596"/>
        <dbReference type="Rhea" id="RHEA-COMP:10136"/>
        <dbReference type="Rhea" id="RHEA-COMP:20101"/>
        <dbReference type="ChEBI" id="CHEBI:15378"/>
        <dbReference type="ChEBI" id="CHEBI:30616"/>
        <dbReference type="ChEBI" id="CHEBI:46858"/>
        <dbReference type="ChEBI" id="CHEBI:61978"/>
        <dbReference type="ChEBI" id="CHEBI:456216"/>
        <dbReference type="EC" id="2.7.10.1"/>
    </reaction>
</comment>
<comment type="cofactor">
    <cofactor evidence="1">
        <name>Mn(2+)</name>
        <dbReference type="ChEBI" id="CHEBI:29035"/>
    </cofactor>
</comment>
<comment type="subunit">
    <text evidence="1">Probable tetramer of 2 alpha and 2 beta chains linked by disulfide bonds. The alpha chains contribute to the formation of the ligand-binding domain, while the beta chains carry the kinase domain (By similarity).</text>
</comment>
<comment type="subcellular location">
    <subcellularLocation>
        <location evidence="1">Membrane</location>
        <topology evidence="1">Single-pass type I membrane protein</topology>
    </subcellularLocation>
</comment>
<comment type="similarity">
    <text evidence="3">Belongs to the protein kinase superfamily. Tyr protein kinase family. Insulin receptor subfamily.</text>
</comment>
<dbReference type="EC" id="2.7.10.1"/>
<dbReference type="EMBL" id="X84994">
    <property type="protein sequence ID" value="CAA59353.1"/>
    <property type="molecule type" value="mRNA"/>
</dbReference>
<dbReference type="PIR" id="T43212">
    <property type="entry name" value="T43212"/>
</dbReference>
<dbReference type="SMR" id="Q25410"/>
<dbReference type="GO" id="GO:0030424">
    <property type="term" value="C:axon"/>
    <property type="evidence" value="ECO:0007669"/>
    <property type="project" value="TreeGrafter"/>
</dbReference>
<dbReference type="GO" id="GO:0005899">
    <property type="term" value="C:insulin receptor complex"/>
    <property type="evidence" value="ECO:0007669"/>
    <property type="project" value="TreeGrafter"/>
</dbReference>
<dbReference type="GO" id="GO:0005524">
    <property type="term" value="F:ATP binding"/>
    <property type="evidence" value="ECO:0007669"/>
    <property type="project" value="UniProtKB-KW"/>
</dbReference>
<dbReference type="GO" id="GO:0005009">
    <property type="term" value="F:insulin receptor activity"/>
    <property type="evidence" value="ECO:0007669"/>
    <property type="project" value="TreeGrafter"/>
</dbReference>
<dbReference type="GO" id="GO:0043560">
    <property type="term" value="F:insulin receptor substrate binding"/>
    <property type="evidence" value="ECO:0007669"/>
    <property type="project" value="TreeGrafter"/>
</dbReference>
<dbReference type="GO" id="GO:0046872">
    <property type="term" value="F:metal ion binding"/>
    <property type="evidence" value="ECO:0007669"/>
    <property type="project" value="UniProtKB-KW"/>
</dbReference>
<dbReference type="GO" id="GO:0042593">
    <property type="term" value="P:glucose homeostasis"/>
    <property type="evidence" value="ECO:0007669"/>
    <property type="project" value="TreeGrafter"/>
</dbReference>
<dbReference type="GO" id="GO:0043410">
    <property type="term" value="P:positive regulation of MAPK cascade"/>
    <property type="evidence" value="ECO:0007669"/>
    <property type="project" value="TreeGrafter"/>
</dbReference>
<dbReference type="GO" id="GO:0051897">
    <property type="term" value="P:positive regulation of phosphatidylinositol 3-kinase/protein kinase B signal transduction"/>
    <property type="evidence" value="ECO:0007669"/>
    <property type="project" value="TreeGrafter"/>
</dbReference>
<dbReference type="CDD" id="cd00063">
    <property type="entry name" value="FN3"/>
    <property type="match status" value="2"/>
</dbReference>
<dbReference type="CDD" id="cd00064">
    <property type="entry name" value="FU"/>
    <property type="match status" value="1"/>
</dbReference>
<dbReference type="CDD" id="cd05032">
    <property type="entry name" value="PTKc_InsR_like"/>
    <property type="match status" value="1"/>
</dbReference>
<dbReference type="FunFam" id="1.10.510.10:FF:000528">
    <property type="entry name" value="Tyrosine-protein kinase receptor"/>
    <property type="match status" value="1"/>
</dbReference>
<dbReference type="FunFam" id="3.30.200.20:FF:000026">
    <property type="entry name" value="Tyrosine-protein kinase receptor"/>
    <property type="match status" value="1"/>
</dbReference>
<dbReference type="Gene3D" id="2.10.220.10">
    <property type="entry name" value="Hormone Receptor, Insulin-like Growth Factor Receptor 1, Chain A, domain 2"/>
    <property type="match status" value="1"/>
</dbReference>
<dbReference type="Gene3D" id="2.60.40.10">
    <property type="entry name" value="Immunoglobulins"/>
    <property type="match status" value="3"/>
</dbReference>
<dbReference type="Gene3D" id="3.30.200.20">
    <property type="entry name" value="Phosphorylase Kinase, domain 1"/>
    <property type="match status" value="1"/>
</dbReference>
<dbReference type="Gene3D" id="3.80.20.20">
    <property type="entry name" value="Receptor L-domain"/>
    <property type="match status" value="2"/>
</dbReference>
<dbReference type="Gene3D" id="1.10.510.10">
    <property type="entry name" value="Transferase(Phosphotransferase) domain 1"/>
    <property type="match status" value="1"/>
</dbReference>
<dbReference type="InterPro" id="IPR003961">
    <property type="entry name" value="FN3_dom"/>
</dbReference>
<dbReference type="InterPro" id="IPR036116">
    <property type="entry name" value="FN3_sf"/>
</dbReference>
<dbReference type="InterPro" id="IPR006211">
    <property type="entry name" value="Furin-like_Cys-rich_dom"/>
</dbReference>
<dbReference type="InterPro" id="IPR006212">
    <property type="entry name" value="Furin_repeat"/>
</dbReference>
<dbReference type="InterPro" id="IPR009030">
    <property type="entry name" value="Growth_fac_rcpt_cys_sf"/>
</dbReference>
<dbReference type="InterPro" id="IPR013783">
    <property type="entry name" value="Ig-like_fold"/>
</dbReference>
<dbReference type="InterPro" id="IPR011009">
    <property type="entry name" value="Kinase-like_dom_sf"/>
</dbReference>
<dbReference type="InterPro" id="IPR000719">
    <property type="entry name" value="Prot_kinase_dom"/>
</dbReference>
<dbReference type="InterPro" id="IPR017441">
    <property type="entry name" value="Protein_kinase_ATP_BS"/>
</dbReference>
<dbReference type="InterPro" id="IPR000494">
    <property type="entry name" value="Rcpt_L-dom"/>
</dbReference>
<dbReference type="InterPro" id="IPR036941">
    <property type="entry name" value="Rcpt_L-dom_sf"/>
</dbReference>
<dbReference type="InterPro" id="IPR050122">
    <property type="entry name" value="RTK"/>
</dbReference>
<dbReference type="InterPro" id="IPR001245">
    <property type="entry name" value="Ser-Thr/Tyr_kinase_cat_dom"/>
</dbReference>
<dbReference type="InterPro" id="IPR008266">
    <property type="entry name" value="Tyr_kinase_AS"/>
</dbReference>
<dbReference type="InterPro" id="IPR020635">
    <property type="entry name" value="Tyr_kinase_cat_dom"/>
</dbReference>
<dbReference type="InterPro" id="IPR002011">
    <property type="entry name" value="Tyr_kinase_rcpt_2_CS"/>
</dbReference>
<dbReference type="PANTHER" id="PTHR24416:SF525">
    <property type="entry name" value="INSULIN-LIKE RECEPTOR"/>
    <property type="match status" value="1"/>
</dbReference>
<dbReference type="PANTHER" id="PTHR24416">
    <property type="entry name" value="TYROSINE-PROTEIN KINASE RECEPTOR"/>
    <property type="match status" value="1"/>
</dbReference>
<dbReference type="Pfam" id="PF00041">
    <property type="entry name" value="fn3"/>
    <property type="match status" value="1"/>
</dbReference>
<dbReference type="Pfam" id="PF00757">
    <property type="entry name" value="Furin-like"/>
    <property type="match status" value="1"/>
</dbReference>
<dbReference type="Pfam" id="PF07714">
    <property type="entry name" value="PK_Tyr_Ser-Thr"/>
    <property type="match status" value="1"/>
</dbReference>
<dbReference type="Pfam" id="PF01030">
    <property type="entry name" value="Recep_L_domain"/>
    <property type="match status" value="2"/>
</dbReference>
<dbReference type="PRINTS" id="PR00109">
    <property type="entry name" value="TYRKINASE"/>
</dbReference>
<dbReference type="SMART" id="SM00060">
    <property type="entry name" value="FN3"/>
    <property type="match status" value="3"/>
</dbReference>
<dbReference type="SMART" id="SM00261">
    <property type="entry name" value="FU"/>
    <property type="match status" value="1"/>
</dbReference>
<dbReference type="SMART" id="SM00219">
    <property type="entry name" value="TyrKc"/>
    <property type="match status" value="1"/>
</dbReference>
<dbReference type="SUPFAM" id="SSF49265">
    <property type="entry name" value="Fibronectin type III"/>
    <property type="match status" value="2"/>
</dbReference>
<dbReference type="SUPFAM" id="SSF57184">
    <property type="entry name" value="Growth factor receptor domain"/>
    <property type="match status" value="1"/>
</dbReference>
<dbReference type="SUPFAM" id="SSF52058">
    <property type="entry name" value="L domain-like"/>
    <property type="match status" value="2"/>
</dbReference>
<dbReference type="SUPFAM" id="SSF56112">
    <property type="entry name" value="Protein kinase-like (PK-like)"/>
    <property type="match status" value="1"/>
</dbReference>
<dbReference type="PROSITE" id="PS50853">
    <property type="entry name" value="FN3"/>
    <property type="match status" value="4"/>
</dbReference>
<dbReference type="PROSITE" id="PS00107">
    <property type="entry name" value="PROTEIN_KINASE_ATP"/>
    <property type="match status" value="1"/>
</dbReference>
<dbReference type="PROSITE" id="PS50011">
    <property type="entry name" value="PROTEIN_KINASE_DOM"/>
    <property type="match status" value="1"/>
</dbReference>
<dbReference type="PROSITE" id="PS00109">
    <property type="entry name" value="PROTEIN_KINASE_TYR"/>
    <property type="match status" value="1"/>
</dbReference>
<dbReference type="PROSITE" id="PS00239">
    <property type="entry name" value="RECEPTOR_TYR_KIN_II"/>
    <property type="match status" value="1"/>
</dbReference>
<accession>Q25410</accession>
<name>MIPR_LYMST</name>
<evidence type="ECO:0000250" key="1"/>
<evidence type="ECO:0000255" key="2"/>
<evidence type="ECO:0000255" key="3">
    <source>
        <dbReference type="PROSITE-ProRule" id="PRU00159"/>
    </source>
</evidence>
<evidence type="ECO:0000255" key="4">
    <source>
        <dbReference type="PROSITE-ProRule" id="PRU00316"/>
    </source>
</evidence>
<evidence type="ECO:0000255" key="5">
    <source>
        <dbReference type="PROSITE-ProRule" id="PRU10028"/>
    </source>
</evidence>
<evidence type="ECO:0000256" key="6">
    <source>
        <dbReference type="SAM" id="MobiDB-lite"/>
    </source>
</evidence>
<reference key="1">
    <citation type="journal article" date="1995" name="Gene">
        <title>Characterization of a putative molluscan insulin-related peptide receptor.</title>
        <authorList>
            <person name="Roovers E."/>
            <person name="Vincent M."/>
            <person name="van Kesteren E."/>
            <person name="Geraerts W.P.M."/>
            <person name="Planta R.J."/>
            <person name="Vreugdenhil E."/>
            <person name="van Heerikhuizen H."/>
        </authorList>
    </citation>
    <scope>NUCLEOTIDE SEQUENCE [MRNA]</scope>
    <source>
        <tissue>CNS</tissue>
    </source>
</reference>
<keyword id="KW-0067">ATP-binding</keyword>
<keyword id="KW-0165">Cleavage on pair of basic residues</keyword>
<keyword id="KW-1015">Disulfide bond</keyword>
<keyword id="KW-0325">Glycoprotein</keyword>
<keyword id="KW-0418">Kinase</keyword>
<keyword id="KW-0464">Manganese</keyword>
<keyword id="KW-0472">Membrane</keyword>
<keyword id="KW-0479">Metal-binding</keyword>
<keyword id="KW-0547">Nucleotide-binding</keyword>
<keyword id="KW-0597">Phosphoprotein</keyword>
<keyword id="KW-0675">Receptor</keyword>
<keyword id="KW-0677">Repeat</keyword>
<keyword id="KW-0732">Signal</keyword>
<keyword id="KW-0808">Transferase</keyword>
<keyword id="KW-0812">Transmembrane</keyword>
<keyword id="KW-1133">Transmembrane helix</keyword>
<keyword id="KW-0829">Tyrosine-protein kinase</keyword>
<protein>
    <recommendedName>
        <fullName>Putative molluscan insulin-related peptide(s) receptor</fullName>
        <ecNumber>2.7.10.1</ecNumber>
    </recommendedName>
    <component>
        <recommendedName>
            <fullName>Putative molluscan insulin-related peptide(s) receptor alpha chain</fullName>
        </recommendedName>
    </component>
    <component>
        <recommendedName>
            <fullName>Putative molluscan insulin-related peptide(s) receptor beta chain</fullName>
        </recommendedName>
    </component>
</protein>